<sequence>MSLKSYMQLVRIHNVIGAALGAIMGFLVSSQWYLELKGILLSALVVGLIAAGGYVINDVYDVEIDKINKPYRPIPSGKISVNKAKALSIALFIIGIALSILLNIYALVIALVTAIGLIYYAKDLKKTGFYGNLLVATTTALSIFYGGLAFFSDNWLLRIIIPTLYAFFLTLIREIVKGIEDYNGDSLNNVKTLATTLGINKSWRIAKILLVLLLIISPLPFFIGFNLIYLILLILVFIPFTILSIIQKETIEGASKARTYLKISAISGIIAFLLGSLPFFKG</sequence>
<comment type="function">
    <text evidence="2">Prenyltransferase that catalyzes the transfer of the geranylgeranyl moiety of geranylgeranyl diphosphate (GGPP) to the C2 hydroxyl of (S)-3-O-geranylgeranylglyceryl phosphate (GGGP). This reaction is the second ether-bond-formation step in the biosynthesis of archaeal membrane lipids. Cannot use other prenyl donors, i.e. farnesyl diphosphate (FPP) and phytyl diphosphate. Moreover, 4-hydroxybenzoate, 1,4-dihydroxy 2-naphthoate, homogentisate, and alpha-glycerophosphate do not function as prenyl acceptor substrates.</text>
</comment>
<comment type="catalytic activity">
    <reaction evidence="2">
        <text>sn-3-O-(geranylgeranyl)glycerol 1-phosphate + (2E,6E,10E)-geranylgeranyl diphosphate = 2,3-bis-O-(geranylgeranyl)-sn-glycerol 1-phosphate + diphosphate</text>
        <dbReference type="Rhea" id="RHEA:18109"/>
        <dbReference type="ChEBI" id="CHEBI:33019"/>
        <dbReference type="ChEBI" id="CHEBI:57677"/>
        <dbReference type="ChEBI" id="CHEBI:58756"/>
        <dbReference type="ChEBI" id="CHEBI:58837"/>
        <dbReference type="EC" id="2.5.1.42"/>
    </reaction>
</comment>
<comment type="cofactor">
    <cofactor evidence="2">
        <name>Mg(2+)</name>
        <dbReference type="ChEBI" id="CHEBI:18420"/>
    </cofactor>
    <cofactor evidence="2">
        <name>Ca(2+)</name>
        <dbReference type="ChEBI" id="CHEBI:29108"/>
    </cofactor>
    <text evidence="2">Magnesium. Can also use Ca(2+), but less efficiently.</text>
</comment>
<comment type="activity regulation">
    <text evidence="2">Inhibited by EDTA in vitro.</text>
</comment>
<comment type="biophysicochemical properties">
    <phDependence>
        <text evidence="2">Optimum pH is 6.0.</text>
    </phDependence>
</comment>
<comment type="pathway">
    <text>Membrane lipid metabolism; glycerophospholipid metabolism.</text>
</comment>
<comment type="subcellular location">
    <subcellularLocation>
        <location evidence="4">Cell membrane</location>
        <topology evidence="4">Multi-pass membrane protein</topology>
    </subcellularLocation>
</comment>
<comment type="similarity">
    <text evidence="3">Belongs to the UbiA prenyltransferase family. DGGGP synthase subfamily.</text>
</comment>
<protein>
    <recommendedName>
        <fullName>Digeranylgeranylglyceryl phosphate synthase</fullName>
        <shortName>DGGGP synthase</shortName>
        <shortName>DGGGPS</shortName>
        <ecNumber>2.5.1.42</ecNumber>
    </recommendedName>
    <alternativeName>
        <fullName>(S)-2,3-di-O-geranylgeranylglyceryl phosphate synthase</fullName>
    </alternativeName>
    <alternativeName>
        <fullName>Geranylgeranylglycerol-phosphate geranylgeranyltransferase</fullName>
    </alternativeName>
</protein>
<name>DGGGP_SACS2</name>
<proteinExistence type="evidence at protein level"/>
<gene>
    <name type="primary">ubiA-2</name>
    <name type="ordered locus">SSO0583</name>
    <name type="ORF">C21_016</name>
</gene>
<accession>Q9UWY6</accession>
<dbReference type="EC" id="2.5.1.42"/>
<dbReference type="EMBL" id="Y18930">
    <property type="protein sequence ID" value="CAB57717.1"/>
    <property type="molecule type" value="Genomic_DNA"/>
</dbReference>
<dbReference type="EMBL" id="AE006641">
    <property type="protein sequence ID" value="AAK40896.1"/>
    <property type="molecule type" value="Genomic_DNA"/>
</dbReference>
<dbReference type="PIR" id="A99205">
    <property type="entry name" value="A99205"/>
</dbReference>
<dbReference type="SMR" id="Q9UWY6"/>
<dbReference type="FunCoup" id="Q9UWY6">
    <property type="interactions" value="19"/>
</dbReference>
<dbReference type="STRING" id="273057.SSO0583"/>
<dbReference type="PaxDb" id="273057-SSO0583"/>
<dbReference type="EnsemblBacteria" id="AAK40896">
    <property type="protein sequence ID" value="AAK40896"/>
    <property type="gene ID" value="SSO0583"/>
</dbReference>
<dbReference type="KEGG" id="sso:SSO0583"/>
<dbReference type="PATRIC" id="fig|273057.12.peg.591"/>
<dbReference type="eggNOG" id="arCOG00476">
    <property type="taxonomic scope" value="Archaea"/>
</dbReference>
<dbReference type="HOGENOM" id="CLU_073311_1_1_2"/>
<dbReference type="InParanoid" id="Q9UWY6"/>
<dbReference type="PhylomeDB" id="Q9UWY6"/>
<dbReference type="BRENDA" id="2.5.1.42">
    <property type="organism ID" value="6163"/>
</dbReference>
<dbReference type="UniPathway" id="UPA00940"/>
<dbReference type="Proteomes" id="UP000001974">
    <property type="component" value="Chromosome"/>
</dbReference>
<dbReference type="GO" id="GO:0005886">
    <property type="term" value="C:plasma membrane"/>
    <property type="evidence" value="ECO:0007669"/>
    <property type="project" value="UniProtKB-SubCell"/>
</dbReference>
<dbReference type="GO" id="GO:0047295">
    <property type="term" value="F:geranylgeranylglycerol-phosphate geranylgeranyltransferase activity"/>
    <property type="evidence" value="ECO:0007669"/>
    <property type="project" value="UniProtKB-UniRule"/>
</dbReference>
<dbReference type="GO" id="GO:0000287">
    <property type="term" value="F:magnesium ion binding"/>
    <property type="evidence" value="ECO:0007669"/>
    <property type="project" value="UniProtKB-UniRule"/>
</dbReference>
<dbReference type="GO" id="GO:0046474">
    <property type="term" value="P:glycerophospholipid biosynthetic process"/>
    <property type="evidence" value="ECO:0007669"/>
    <property type="project" value="UniProtKB-UniRule"/>
</dbReference>
<dbReference type="CDD" id="cd13961">
    <property type="entry name" value="PT_UbiA_DGGGPS"/>
    <property type="match status" value="1"/>
</dbReference>
<dbReference type="Gene3D" id="1.10.357.140">
    <property type="entry name" value="UbiA prenyltransferase"/>
    <property type="match status" value="1"/>
</dbReference>
<dbReference type="Gene3D" id="1.20.120.1780">
    <property type="entry name" value="UbiA prenyltransferase"/>
    <property type="match status" value="1"/>
</dbReference>
<dbReference type="HAMAP" id="MF_01286">
    <property type="entry name" value="DGGGP_synth"/>
    <property type="match status" value="1"/>
</dbReference>
<dbReference type="InterPro" id="IPR023547">
    <property type="entry name" value="DGGGP_synth"/>
</dbReference>
<dbReference type="InterPro" id="IPR050475">
    <property type="entry name" value="Prenyltransferase_related"/>
</dbReference>
<dbReference type="InterPro" id="IPR000537">
    <property type="entry name" value="UbiA_prenyltransferase"/>
</dbReference>
<dbReference type="InterPro" id="IPR044878">
    <property type="entry name" value="UbiA_sf"/>
</dbReference>
<dbReference type="PANTHER" id="PTHR42723">
    <property type="entry name" value="CHLOROPHYLL SYNTHASE"/>
    <property type="match status" value="1"/>
</dbReference>
<dbReference type="PANTHER" id="PTHR42723:SF1">
    <property type="entry name" value="CHLOROPHYLL SYNTHASE, CHLOROPLASTIC"/>
    <property type="match status" value="1"/>
</dbReference>
<dbReference type="Pfam" id="PF01040">
    <property type="entry name" value="UbiA"/>
    <property type="match status" value="1"/>
</dbReference>
<feature type="chain" id="PRO_0000350691" description="Digeranylgeranylglyceryl phosphate synthase">
    <location>
        <begin position="1"/>
        <end position="282"/>
    </location>
</feature>
<feature type="transmembrane region" description="Helical" evidence="1">
    <location>
        <begin position="15"/>
        <end position="35"/>
    </location>
</feature>
<feature type="transmembrane region" description="Helical" evidence="1">
    <location>
        <begin position="36"/>
        <end position="56"/>
    </location>
</feature>
<feature type="transmembrane region" description="Helical" evidence="1">
    <location>
        <begin position="81"/>
        <end position="100"/>
    </location>
</feature>
<feature type="transmembrane region" description="Helical" evidence="1">
    <location>
        <begin position="104"/>
        <end position="121"/>
    </location>
</feature>
<feature type="transmembrane region" description="Helical" evidence="1">
    <location>
        <begin position="131"/>
        <end position="151"/>
    </location>
</feature>
<feature type="transmembrane region" description="Helical" evidence="1">
    <location>
        <begin position="159"/>
        <end position="179"/>
    </location>
</feature>
<feature type="transmembrane region" description="Helical" evidence="1">
    <location>
        <begin position="201"/>
        <end position="221"/>
    </location>
</feature>
<feature type="transmembrane region" description="Helical" evidence="1">
    <location>
        <begin position="222"/>
        <end position="242"/>
    </location>
</feature>
<feature type="transmembrane region" description="Helical" evidence="1">
    <location>
        <begin position="260"/>
        <end position="280"/>
    </location>
</feature>
<organism>
    <name type="scientific">Saccharolobus solfataricus (strain ATCC 35092 / DSM 1617 / JCM 11322 / P2)</name>
    <name type="common">Sulfolobus solfataricus</name>
    <dbReference type="NCBI Taxonomy" id="273057"/>
    <lineage>
        <taxon>Archaea</taxon>
        <taxon>Thermoproteota</taxon>
        <taxon>Thermoprotei</taxon>
        <taxon>Sulfolobales</taxon>
        <taxon>Sulfolobaceae</taxon>
        <taxon>Saccharolobus</taxon>
    </lineage>
</organism>
<reference key="1">
    <citation type="journal article" date="2000" name="Genome">
        <title>Gene content and organization of a 281-kbp contig from the genome of the extremely thermophilic archaeon, Sulfolobus solfataricus P2.</title>
        <authorList>
            <person name="Charlebois R.L."/>
            <person name="Singh R.K."/>
            <person name="Chan-Weiher C.C.-Y."/>
            <person name="Allard G."/>
            <person name="Chow C."/>
            <person name="Confalonieri F."/>
            <person name="Curtis B."/>
            <person name="Duguet M."/>
            <person name="Erauso G."/>
            <person name="Faguy D."/>
            <person name="Gaasterland T."/>
            <person name="Garrett R.A."/>
            <person name="Gordon P."/>
            <person name="Jeffries A.C."/>
            <person name="Kozera C."/>
            <person name="Kushwaha N."/>
            <person name="Lafleur E."/>
            <person name="Medina N."/>
            <person name="Peng X."/>
            <person name="Penny S.L."/>
            <person name="She Q."/>
            <person name="St Jean A."/>
            <person name="van der Oost J."/>
            <person name="Young F."/>
            <person name="Zivanovic Y."/>
            <person name="Doolittle W.F."/>
            <person name="Ragan M.A."/>
            <person name="Sensen C.W."/>
        </authorList>
    </citation>
    <scope>NUCLEOTIDE SEQUENCE [LARGE SCALE GENOMIC DNA]</scope>
    <source>
        <strain>ATCC 35092 / DSM 1617 / JCM 11322 / P2</strain>
    </source>
</reference>
<reference key="2">
    <citation type="journal article" date="2001" name="Proc. Natl. Acad. Sci. U.S.A.">
        <title>The complete genome of the crenarchaeon Sulfolobus solfataricus P2.</title>
        <authorList>
            <person name="She Q."/>
            <person name="Singh R.K."/>
            <person name="Confalonieri F."/>
            <person name="Zivanovic Y."/>
            <person name="Allard G."/>
            <person name="Awayez M.J."/>
            <person name="Chan-Weiher C.C.-Y."/>
            <person name="Clausen I.G."/>
            <person name="Curtis B.A."/>
            <person name="De Moors A."/>
            <person name="Erauso G."/>
            <person name="Fletcher C."/>
            <person name="Gordon P.M.K."/>
            <person name="Heikamp-de Jong I."/>
            <person name="Jeffries A.C."/>
            <person name="Kozera C.J."/>
            <person name="Medina N."/>
            <person name="Peng X."/>
            <person name="Thi-Ngoc H.P."/>
            <person name="Redder P."/>
            <person name="Schenk M.E."/>
            <person name="Theriault C."/>
            <person name="Tolstrup N."/>
            <person name="Charlebois R.L."/>
            <person name="Doolittle W.F."/>
            <person name="Duguet M."/>
            <person name="Gaasterland T."/>
            <person name="Garrett R.A."/>
            <person name="Ragan M.A."/>
            <person name="Sensen C.W."/>
            <person name="Van der Oost J."/>
        </authorList>
    </citation>
    <scope>NUCLEOTIDE SEQUENCE [LARGE SCALE GENOMIC DNA]</scope>
    <source>
        <strain>ATCC 35092 / DSM 1617 / JCM 11322 / P2</strain>
    </source>
</reference>
<reference key="3">
    <citation type="journal article" date="2004" name="J. Biol. Chem.">
        <title>(S)-2,3-di-O-geranylgeranylglyceryl phosphate synthase from the thermoacidophilic archaeon Sulfolobus solfataricus. Molecular cloning and characterization of a membrane-intrinsic prenyltransferase involved in the biosynthesis of archaeal ether-linked membrane lipids.</title>
        <authorList>
            <person name="Hemmi H."/>
            <person name="Shibuya K."/>
            <person name="Takahashi Y."/>
            <person name="Nakayama T."/>
            <person name="Nishino T."/>
        </authorList>
    </citation>
    <scope>FUNCTION</scope>
    <scope>CATALYTIC ACTIVITY</scope>
    <scope>SUBSTRATE SPECIFICITY</scope>
    <scope>COFACTOR</scope>
    <scope>PH DEPENDENCE</scope>
    <scope>ACTIVITY REGULATION</scope>
    <scope>SUBCELLULAR LOCATION</scope>
    <source>
        <strain>ATCC 35092 / DSM 1617 / JCM 11322 / P2</strain>
    </source>
</reference>
<keyword id="KW-1003">Cell membrane</keyword>
<keyword id="KW-0444">Lipid biosynthesis</keyword>
<keyword id="KW-0443">Lipid metabolism</keyword>
<keyword id="KW-0460">Magnesium</keyword>
<keyword id="KW-0472">Membrane</keyword>
<keyword id="KW-0594">Phospholipid biosynthesis</keyword>
<keyword id="KW-1208">Phospholipid metabolism</keyword>
<keyword id="KW-1185">Reference proteome</keyword>
<keyword id="KW-0808">Transferase</keyword>
<keyword id="KW-0812">Transmembrane</keyword>
<keyword id="KW-1133">Transmembrane helix</keyword>
<evidence type="ECO:0000255" key="1"/>
<evidence type="ECO:0000269" key="2">
    <source>
    </source>
</evidence>
<evidence type="ECO:0000305" key="3"/>
<evidence type="ECO:0000305" key="4">
    <source>
    </source>
</evidence>